<proteinExistence type="inferred from homology"/>
<evidence type="ECO:0000255" key="1">
    <source>
        <dbReference type="HAMAP-Rule" id="MF_00295"/>
    </source>
</evidence>
<gene>
    <name evidence="1" type="primary">metAS</name>
    <name type="ordered locus">SEN3964</name>
</gene>
<name>METAS_SALEP</name>
<reference key="1">
    <citation type="journal article" date="2008" name="Genome Res.">
        <title>Comparative genome analysis of Salmonella enteritidis PT4 and Salmonella gallinarum 287/91 provides insights into evolutionary and host adaptation pathways.</title>
        <authorList>
            <person name="Thomson N.R."/>
            <person name="Clayton D.J."/>
            <person name="Windhorst D."/>
            <person name="Vernikos G."/>
            <person name="Davidson S."/>
            <person name="Churcher C."/>
            <person name="Quail M.A."/>
            <person name="Stevens M."/>
            <person name="Jones M.A."/>
            <person name="Watson M."/>
            <person name="Barron A."/>
            <person name="Layton A."/>
            <person name="Pickard D."/>
            <person name="Kingsley R.A."/>
            <person name="Bignell A."/>
            <person name="Clark L."/>
            <person name="Harris B."/>
            <person name="Ormond D."/>
            <person name="Abdellah Z."/>
            <person name="Brooks K."/>
            <person name="Cherevach I."/>
            <person name="Chillingworth T."/>
            <person name="Woodward J."/>
            <person name="Norberczak H."/>
            <person name="Lord A."/>
            <person name="Arrowsmith C."/>
            <person name="Jagels K."/>
            <person name="Moule S."/>
            <person name="Mungall K."/>
            <person name="Saunders M."/>
            <person name="Whitehead S."/>
            <person name="Chabalgoity J.A."/>
            <person name="Maskell D."/>
            <person name="Humphreys T."/>
            <person name="Roberts M."/>
            <person name="Barrow P.A."/>
            <person name="Dougan G."/>
            <person name="Parkhill J."/>
        </authorList>
    </citation>
    <scope>NUCLEOTIDE SEQUENCE [LARGE SCALE GENOMIC DNA]</scope>
    <source>
        <strain>P125109</strain>
    </source>
</reference>
<keyword id="KW-0012">Acyltransferase</keyword>
<keyword id="KW-0028">Amino-acid biosynthesis</keyword>
<keyword id="KW-0963">Cytoplasm</keyword>
<keyword id="KW-0486">Methionine biosynthesis</keyword>
<keyword id="KW-0808">Transferase</keyword>
<organism>
    <name type="scientific">Salmonella enteritidis PT4 (strain P125109)</name>
    <dbReference type="NCBI Taxonomy" id="550537"/>
    <lineage>
        <taxon>Bacteria</taxon>
        <taxon>Pseudomonadati</taxon>
        <taxon>Pseudomonadota</taxon>
        <taxon>Gammaproteobacteria</taxon>
        <taxon>Enterobacterales</taxon>
        <taxon>Enterobacteriaceae</taxon>
        <taxon>Salmonella</taxon>
    </lineage>
</organism>
<comment type="function">
    <text evidence="1">Transfers a succinyl group from succinyl-CoA to L-homoserine, forming succinyl-L-homoserine.</text>
</comment>
<comment type="catalytic activity">
    <reaction evidence="1">
        <text>L-homoserine + succinyl-CoA = O-succinyl-L-homoserine + CoA</text>
        <dbReference type="Rhea" id="RHEA:22008"/>
        <dbReference type="ChEBI" id="CHEBI:57287"/>
        <dbReference type="ChEBI" id="CHEBI:57292"/>
        <dbReference type="ChEBI" id="CHEBI:57476"/>
        <dbReference type="ChEBI" id="CHEBI:57661"/>
        <dbReference type="EC" id="2.3.1.46"/>
    </reaction>
</comment>
<comment type="pathway">
    <text evidence="1">Amino-acid biosynthesis; L-methionine biosynthesis via de novo pathway; O-succinyl-L-homoserine from L-homoserine: step 1/1.</text>
</comment>
<comment type="subunit">
    <text evidence="1">Homodimer.</text>
</comment>
<comment type="subcellular location">
    <subcellularLocation>
        <location evidence="1">Cytoplasm</location>
    </subcellularLocation>
</comment>
<comment type="similarity">
    <text evidence="1">Belongs to the MetA family.</text>
</comment>
<accession>B5QYG3</accession>
<feature type="chain" id="PRO_1000115189" description="Homoserine O-succinyltransferase">
    <location>
        <begin position="1"/>
        <end position="309"/>
    </location>
</feature>
<feature type="active site" description="Acyl-thioester intermediate" evidence="1">
    <location>
        <position position="142"/>
    </location>
</feature>
<feature type="active site" description="Proton acceptor" evidence="1">
    <location>
        <position position="235"/>
    </location>
</feature>
<feature type="active site" evidence="1">
    <location>
        <position position="237"/>
    </location>
</feature>
<feature type="binding site" evidence="1">
    <location>
        <position position="163"/>
    </location>
    <ligand>
        <name>substrate</name>
    </ligand>
</feature>
<feature type="binding site" evidence="1">
    <location>
        <position position="192"/>
    </location>
    <ligand>
        <name>substrate</name>
    </ligand>
</feature>
<feature type="binding site" evidence="1">
    <location>
        <position position="249"/>
    </location>
    <ligand>
        <name>substrate</name>
    </ligand>
</feature>
<feature type="site" description="Important for acyl-CoA specificity" evidence="1">
    <location>
        <position position="111"/>
    </location>
</feature>
<feature type="site" description="Important for substrate specificity" evidence="1">
    <location>
        <position position="192"/>
    </location>
</feature>
<dbReference type="EC" id="2.3.1.46" evidence="1"/>
<dbReference type="EMBL" id="AM933172">
    <property type="protein sequence ID" value="CAR35533.1"/>
    <property type="molecule type" value="Genomic_DNA"/>
</dbReference>
<dbReference type="SMR" id="B5QYG3"/>
<dbReference type="KEGG" id="set:SEN3964"/>
<dbReference type="HOGENOM" id="CLU_057851_0_1_6"/>
<dbReference type="UniPathway" id="UPA00051">
    <property type="reaction ID" value="UER00075"/>
</dbReference>
<dbReference type="Proteomes" id="UP000000613">
    <property type="component" value="Chromosome"/>
</dbReference>
<dbReference type="GO" id="GO:0005737">
    <property type="term" value="C:cytoplasm"/>
    <property type="evidence" value="ECO:0007669"/>
    <property type="project" value="UniProtKB-SubCell"/>
</dbReference>
<dbReference type="GO" id="GO:0004414">
    <property type="term" value="F:homoserine O-acetyltransferase activity"/>
    <property type="evidence" value="ECO:0007669"/>
    <property type="project" value="UniProtKB-UniRule"/>
</dbReference>
<dbReference type="GO" id="GO:0008899">
    <property type="term" value="F:homoserine O-succinyltransferase activity"/>
    <property type="evidence" value="ECO:0007669"/>
    <property type="project" value="UniProtKB-EC"/>
</dbReference>
<dbReference type="GO" id="GO:0019281">
    <property type="term" value="P:L-methionine biosynthetic process from homoserine via O-succinyl-L-homoserine and cystathionine"/>
    <property type="evidence" value="ECO:0007669"/>
    <property type="project" value="InterPro"/>
</dbReference>
<dbReference type="CDD" id="cd03131">
    <property type="entry name" value="GATase1_HTS"/>
    <property type="match status" value="1"/>
</dbReference>
<dbReference type="FunFam" id="3.40.50.880:FF:000004">
    <property type="entry name" value="Homoserine O-succinyltransferase"/>
    <property type="match status" value="1"/>
</dbReference>
<dbReference type="Gene3D" id="3.40.50.880">
    <property type="match status" value="1"/>
</dbReference>
<dbReference type="HAMAP" id="MF_00295">
    <property type="entry name" value="MetA_acyltransf"/>
    <property type="match status" value="1"/>
</dbReference>
<dbReference type="InterPro" id="IPR029062">
    <property type="entry name" value="Class_I_gatase-like"/>
</dbReference>
<dbReference type="InterPro" id="IPR005697">
    <property type="entry name" value="HST_MetA"/>
</dbReference>
<dbReference type="InterPro" id="IPR033752">
    <property type="entry name" value="MetA_family"/>
</dbReference>
<dbReference type="NCBIfam" id="TIGR01001">
    <property type="entry name" value="metA"/>
    <property type="match status" value="1"/>
</dbReference>
<dbReference type="PANTHER" id="PTHR20919">
    <property type="entry name" value="HOMOSERINE O-SUCCINYLTRANSFERASE"/>
    <property type="match status" value="1"/>
</dbReference>
<dbReference type="PANTHER" id="PTHR20919:SF0">
    <property type="entry name" value="HOMOSERINE O-SUCCINYLTRANSFERASE"/>
    <property type="match status" value="1"/>
</dbReference>
<dbReference type="Pfam" id="PF04204">
    <property type="entry name" value="HTS"/>
    <property type="match status" value="1"/>
</dbReference>
<dbReference type="PIRSF" id="PIRSF000450">
    <property type="entry name" value="H_ser_succinyltr"/>
    <property type="match status" value="1"/>
</dbReference>
<dbReference type="SUPFAM" id="SSF52317">
    <property type="entry name" value="Class I glutamine amidotransferase-like"/>
    <property type="match status" value="1"/>
</dbReference>
<sequence length="309" mass="35670">MPIRVLDELPAVNFLREENVFVMTTSRASGQEIRPLKVLILNLMPKKIETENQFLRLLSNSPLQVDIQLLRIDARESRNTPAEHLNNFYCNFDDICDQNFDGLIVTGAPLGLVEFNDVAYWPQIRQVLEWAKDHVTSTLFVCWAVQAALNILYGIPKQTRTDKLSGVYEHHILHPHALLTRGFDDSFLAPHSRYADFPAALIRDYTDLEILAETEEGDAYLFASKDKRIAFVTGHPEYDAHTLAGEYFRDVEAGLNPEVPYNYFPKNDPQNIPRATWRSHGNLLFTNWLNYYVYQITPYDLRHMNPTLD</sequence>
<protein>
    <recommendedName>
        <fullName evidence="1">Homoserine O-succinyltransferase</fullName>
        <shortName evidence="1">HST</shortName>
        <ecNumber evidence="1">2.3.1.46</ecNumber>
    </recommendedName>
    <alternativeName>
        <fullName evidence="1">Homoserine transsuccinylase</fullName>
        <shortName evidence="1">HTS</shortName>
    </alternativeName>
</protein>